<dbReference type="EC" id="2.3.1.-" evidence="2"/>
<dbReference type="EMBL" id="AAHK01000165">
    <property type="protein sequence ID" value="EAN96210.1"/>
    <property type="molecule type" value="Genomic_DNA"/>
</dbReference>
<dbReference type="RefSeq" id="XP_818061.1">
    <property type="nucleotide sequence ID" value="XM_812968.1"/>
</dbReference>
<dbReference type="SMR" id="Q4DUK7"/>
<dbReference type="FunCoup" id="Q4DUK7">
    <property type="interactions" value="295"/>
</dbReference>
<dbReference type="PaxDb" id="353153-Q4DUK7"/>
<dbReference type="EnsemblProtists" id="EAN96210">
    <property type="protein sequence ID" value="EAN96210"/>
    <property type="gene ID" value="Tc00.1047053511245.130"/>
</dbReference>
<dbReference type="GeneID" id="3550231"/>
<dbReference type="KEGG" id="tcr:511245.130"/>
<dbReference type="eggNOG" id="KOG3072">
    <property type="taxonomic scope" value="Eukaryota"/>
</dbReference>
<dbReference type="InParanoid" id="Q4DUK7"/>
<dbReference type="UniPathway" id="UPA00094"/>
<dbReference type="Proteomes" id="UP000002296">
    <property type="component" value="Unassembled WGS sequence"/>
</dbReference>
<dbReference type="GO" id="GO:0005789">
    <property type="term" value="C:endoplasmic reticulum membrane"/>
    <property type="evidence" value="ECO:0007669"/>
    <property type="project" value="UniProtKB-SubCell"/>
</dbReference>
<dbReference type="GO" id="GO:0009922">
    <property type="term" value="F:fatty acid elongase activity"/>
    <property type="evidence" value="ECO:0007669"/>
    <property type="project" value="UniProtKB-EC"/>
</dbReference>
<dbReference type="GO" id="GO:0034625">
    <property type="term" value="P:fatty acid elongation, monounsaturated fatty acid"/>
    <property type="evidence" value="ECO:0007669"/>
    <property type="project" value="TreeGrafter"/>
</dbReference>
<dbReference type="GO" id="GO:0034626">
    <property type="term" value="P:fatty acid elongation, polyunsaturated fatty acid"/>
    <property type="evidence" value="ECO:0007669"/>
    <property type="project" value="TreeGrafter"/>
</dbReference>
<dbReference type="GO" id="GO:0019367">
    <property type="term" value="P:fatty acid elongation, saturated fatty acid"/>
    <property type="evidence" value="ECO:0007669"/>
    <property type="project" value="TreeGrafter"/>
</dbReference>
<dbReference type="GO" id="GO:0030148">
    <property type="term" value="P:sphingolipid biosynthetic process"/>
    <property type="evidence" value="ECO:0007669"/>
    <property type="project" value="TreeGrafter"/>
</dbReference>
<dbReference type="GO" id="GO:0042761">
    <property type="term" value="P:very long-chain fatty acid biosynthetic process"/>
    <property type="evidence" value="ECO:0007669"/>
    <property type="project" value="TreeGrafter"/>
</dbReference>
<dbReference type="InterPro" id="IPR030457">
    <property type="entry name" value="ELO_CS"/>
</dbReference>
<dbReference type="InterPro" id="IPR002076">
    <property type="entry name" value="ELO_fam"/>
</dbReference>
<dbReference type="PANTHER" id="PTHR11157:SF105">
    <property type="entry name" value="ELONGATION OF FATTY ACIDS PROTEIN"/>
    <property type="match status" value="1"/>
</dbReference>
<dbReference type="PANTHER" id="PTHR11157">
    <property type="entry name" value="FATTY ACID ACYL TRANSFERASE-RELATED"/>
    <property type="match status" value="1"/>
</dbReference>
<dbReference type="Pfam" id="PF01151">
    <property type="entry name" value="ELO"/>
    <property type="match status" value="1"/>
</dbReference>
<dbReference type="PROSITE" id="PS01188">
    <property type="entry name" value="ELO"/>
    <property type="match status" value="1"/>
</dbReference>
<protein>
    <recommendedName>
        <fullName evidence="7">Fatty acid elongase 1</fullName>
        <ecNumber evidence="2">2.3.1.-</ecNumber>
    </recommendedName>
    <alternativeName>
        <fullName evidence="7">Beta-ketoacyl-CoA synthase</fullName>
    </alternativeName>
    <alternativeName>
        <fullName evidence="5">Elongation of fatty acids protein</fullName>
    </alternativeName>
</protein>
<comment type="function">
    <text evidence="6">Involved in the synthesis of fatty acids (PubMed:37061002). Elongates C4 fatty acids (PubMed:37061002). Required for the normal mitochondrial function, energy metabolism and growth of epimastigotes (PubMed:37061002).</text>
</comment>
<comment type="catalytic activity">
    <reaction evidence="2">
        <text>an acyl-CoA + malonyl-CoA + H(+) = a 3-oxoacyl-CoA + CO2 + CoA</text>
        <dbReference type="Rhea" id="RHEA:50252"/>
        <dbReference type="ChEBI" id="CHEBI:15378"/>
        <dbReference type="ChEBI" id="CHEBI:16526"/>
        <dbReference type="ChEBI" id="CHEBI:57287"/>
        <dbReference type="ChEBI" id="CHEBI:57384"/>
        <dbReference type="ChEBI" id="CHEBI:58342"/>
        <dbReference type="ChEBI" id="CHEBI:90726"/>
    </reaction>
    <physiologicalReaction direction="left-to-right" evidence="2">
        <dbReference type="Rhea" id="RHEA:50253"/>
    </physiologicalReaction>
</comment>
<comment type="pathway">
    <text evidence="8">Lipid metabolism; fatty acid biosynthesis.</text>
</comment>
<comment type="subcellular location">
    <subcellularLocation>
        <location evidence="6">Endoplasmic reticulum membrane</location>
        <topology evidence="3">Multi-pass membrane protein</topology>
    </subcellularLocation>
</comment>
<comment type="similarity">
    <text evidence="8">Belongs to the ELO family.</text>
</comment>
<keyword id="KW-0256">Endoplasmic reticulum</keyword>
<keyword id="KW-0275">Fatty acid biosynthesis</keyword>
<keyword id="KW-0276">Fatty acid metabolism</keyword>
<keyword id="KW-0325">Glycoprotein</keyword>
<keyword id="KW-0444">Lipid biosynthesis</keyword>
<keyword id="KW-0443">Lipid metabolism</keyword>
<keyword id="KW-0472">Membrane</keyword>
<keyword id="KW-1185">Reference proteome</keyword>
<keyword id="KW-0808">Transferase</keyword>
<keyword id="KW-0812">Transmembrane</keyword>
<keyword id="KW-1133">Transmembrane helix</keyword>
<organism evidence="10">
    <name type="scientific">Trypanosoma cruzi (strain CL Brener)</name>
    <dbReference type="NCBI Taxonomy" id="353153"/>
    <lineage>
        <taxon>Eukaryota</taxon>
        <taxon>Discoba</taxon>
        <taxon>Euglenozoa</taxon>
        <taxon>Kinetoplastea</taxon>
        <taxon>Metakinetoplastina</taxon>
        <taxon>Trypanosomatida</taxon>
        <taxon>Trypanosomatidae</taxon>
        <taxon>Trypanosoma</taxon>
        <taxon>Schizotrypanum</taxon>
    </lineage>
</organism>
<accession>Q4DUK7</accession>
<sequence>MEFVQNWDGYAVRDWMIRNVDVVGYISGIYLAFVFTGPKLFAKITGRDGATSVAPARQGGAGGGGSKAVRRAMVLWNLSLSVFSIFGTSTVTPTLVRNIMNKGFYEATCTFNDKEFYTTDVGFWIGVFALSKIPELMDTIFLVLQGKSTLPFLHWYHHVTVLLFSWHTYCVGSSGYIWVAAMNYSVHSIMYLYFAIAEMGYKHVVRPWAPYITILQILQMVMGCFVTLYAMQESHDGRGCGMTWSNMRIQLLMYASYLYLFSEMFVKAHVLPRWAPVATHANGSLKKSS</sequence>
<proteinExistence type="inferred from homology"/>
<evidence type="ECO:0000250" key="1">
    <source>
        <dbReference type="UniProtKB" id="A1L3X0"/>
    </source>
</evidence>
<evidence type="ECO:0000250" key="2">
    <source>
        <dbReference type="UniProtKB" id="Q57UP8"/>
    </source>
</evidence>
<evidence type="ECO:0000255" key="3"/>
<evidence type="ECO:0000255" key="4">
    <source>
        <dbReference type="PROSITE-ProRule" id="PRU00498"/>
    </source>
</evidence>
<evidence type="ECO:0000255" key="5">
    <source>
        <dbReference type="RuleBase" id="RU361115"/>
    </source>
</evidence>
<evidence type="ECO:0000269" key="6">
    <source>
    </source>
</evidence>
<evidence type="ECO:0000303" key="7">
    <source>
    </source>
</evidence>
<evidence type="ECO:0000305" key="8"/>
<evidence type="ECO:0000312" key="9">
    <source>
        <dbReference type="EMBL" id="EAN96210.1"/>
    </source>
</evidence>
<evidence type="ECO:0000312" key="10">
    <source>
        <dbReference type="Proteomes" id="UP000002296"/>
    </source>
</evidence>
<gene>
    <name evidence="7" type="primary">ELO1</name>
    <name evidence="9" type="ORF">Tc00.1047053511245.130</name>
</gene>
<reference evidence="10" key="1">
    <citation type="journal article" date="2005" name="Science">
        <title>The genome sequence of Trypanosoma cruzi, etiologic agent of Chagas disease.</title>
        <authorList>
            <person name="El-Sayed N.M.A."/>
            <person name="Myler P.J."/>
            <person name="Bartholomeu D.C."/>
            <person name="Nilsson D."/>
            <person name="Aggarwal G."/>
            <person name="Tran A.-N."/>
            <person name="Ghedin E."/>
            <person name="Worthey E.A."/>
            <person name="Delcher A.L."/>
            <person name="Blandin G."/>
            <person name="Westenberger S.J."/>
            <person name="Caler E."/>
            <person name="Cerqueira G.C."/>
            <person name="Branche C."/>
            <person name="Haas B."/>
            <person name="Anupama A."/>
            <person name="Arner E."/>
            <person name="Aslund L."/>
            <person name="Attipoe P."/>
            <person name="Bontempi E."/>
            <person name="Bringaud F."/>
            <person name="Burton P."/>
            <person name="Cadag E."/>
            <person name="Campbell D.A."/>
            <person name="Carrington M."/>
            <person name="Crabtree J."/>
            <person name="Darban H."/>
            <person name="da Silveira J.F."/>
            <person name="de Jong P."/>
            <person name="Edwards K."/>
            <person name="Englund P.T."/>
            <person name="Fazelina G."/>
            <person name="Feldblyum T."/>
            <person name="Ferella M."/>
            <person name="Frasch A.C."/>
            <person name="Gull K."/>
            <person name="Horn D."/>
            <person name="Hou L."/>
            <person name="Huang Y."/>
            <person name="Kindlund E."/>
            <person name="Klingbeil M."/>
            <person name="Kluge S."/>
            <person name="Koo H."/>
            <person name="Lacerda D."/>
            <person name="Levin M.J."/>
            <person name="Lorenzi H."/>
            <person name="Louie T."/>
            <person name="Machado C.R."/>
            <person name="McCulloch R."/>
            <person name="McKenna A."/>
            <person name="Mizuno Y."/>
            <person name="Mottram J.C."/>
            <person name="Nelson S."/>
            <person name="Ochaya S."/>
            <person name="Osoegawa K."/>
            <person name="Pai G."/>
            <person name="Parsons M."/>
            <person name="Pentony M."/>
            <person name="Pettersson U."/>
            <person name="Pop M."/>
            <person name="Ramirez J.L."/>
            <person name="Rinta J."/>
            <person name="Robertson L."/>
            <person name="Salzberg S.L."/>
            <person name="Sanchez D.O."/>
            <person name="Seyler A."/>
            <person name="Sharma R."/>
            <person name="Shetty J."/>
            <person name="Simpson A.J."/>
            <person name="Sisk E."/>
            <person name="Tammi M.T."/>
            <person name="Tarleton R."/>
            <person name="Teixeira S."/>
            <person name="Van Aken S."/>
            <person name="Vogt C."/>
            <person name="Ward P.N."/>
            <person name="Wickstead B."/>
            <person name="Wortman J."/>
            <person name="White O."/>
            <person name="Fraser C.M."/>
            <person name="Stuart K.D."/>
            <person name="Andersson B."/>
        </authorList>
    </citation>
    <scope>NUCLEOTIDE SEQUENCE [LARGE SCALE GENOMIC DNA]</scope>
    <source>
        <strain evidence="10">CL Brener</strain>
    </source>
</reference>
<reference evidence="8" key="2">
    <citation type="journal article" date="2023" name="J. Biol. Chem.">
        <title>Fatty acid elongases 1-3 have distinct roles in mitochondrial function, growth, and lipid homeostasis in Trypanosoma cruzi.</title>
        <authorList>
            <person name="Pagura L."/>
            <person name="Dumoulin P.C."/>
            <person name="Ellis C.C."/>
            <person name="Mendes M.T."/>
            <person name="Estevao I.L."/>
            <person name="Almeida I.C."/>
            <person name="Burleigh B.A."/>
        </authorList>
    </citation>
    <scope>FUNCTION</scope>
    <scope>SUBCELLULAR LOCATION</scope>
</reference>
<feature type="chain" id="PRO_0000459368" description="Fatty acid elongase 1">
    <location>
        <begin position="1"/>
        <end position="289"/>
    </location>
</feature>
<feature type="transmembrane region" description="Helical" evidence="3">
    <location>
        <begin position="22"/>
        <end position="42"/>
    </location>
</feature>
<feature type="transmembrane region" description="Helical" evidence="3">
    <location>
        <begin position="72"/>
        <end position="92"/>
    </location>
</feature>
<feature type="transmembrane region" description="Helical" evidence="3">
    <location>
        <begin position="123"/>
        <end position="143"/>
    </location>
</feature>
<feature type="transmembrane region" description="Helical" evidence="3">
    <location>
        <begin position="152"/>
        <end position="172"/>
    </location>
</feature>
<feature type="transmembrane region" description="Helical" evidence="3">
    <location>
        <begin position="177"/>
        <end position="197"/>
    </location>
</feature>
<feature type="transmembrane region" description="Helical" evidence="3">
    <location>
        <begin position="208"/>
        <end position="228"/>
    </location>
</feature>
<feature type="transmembrane region" description="Helical" evidence="3">
    <location>
        <begin position="251"/>
        <end position="271"/>
    </location>
</feature>
<feature type="short sequence motif" description="HxxHH motif" evidence="2">
    <location>
        <begin position="154"/>
        <end position="158"/>
    </location>
</feature>
<feature type="active site" description="Nucleophile" evidence="1">
    <location>
        <position position="157"/>
    </location>
</feature>
<feature type="glycosylation site" description="N-linked (GlcNAc...) asparagine" evidence="4">
    <location>
        <position position="282"/>
    </location>
</feature>
<name>ELO1_TRYCC</name>